<keyword id="KW-1185">Reference proteome</keyword>
<keyword id="KW-0687">Ribonucleoprotein</keyword>
<keyword id="KW-0689">Ribosomal protein</keyword>
<keyword id="KW-0694">RNA-binding</keyword>
<keyword id="KW-0699">rRNA-binding</keyword>
<proteinExistence type="inferred from homology"/>
<protein>
    <recommendedName>
        <fullName evidence="1">Small ribosomal subunit protein uS14</fullName>
    </recommendedName>
    <alternativeName>
        <fullName evidence="3">30S ribosomal protein S14</fullName>
    </alternativeName>
</protein>
<feature type="chain" id="PRO_1000128371" description="Small ribosomal subunit protein uS14">
    <location>
        <begin position="1"/>
        <end position="101"/>
    </location>
</feature>
<feature type="region of interest" description="Disordered" evidence="2">
    <location>
        <begin position="53"/>
        <end position="72"/>
    </location>
</feature>
<feature type="compositionally biased region" description="Basic and acidic residues" evidence="2">
    <location>
        <begin position="61"/>
        <end position="70"/>
    </location>
</feature>
<gene>
    <name evidence="1" type="primary">rpsN</name>
    <name type="ordered locus">Cgl0867</name>
    <name type="ordered locus">cg0989</name>
</gene>
<reference key="1">
    <citation type="journal article" date="2003" name="Appl. Microbiol. Biotechnol.">
        <title>The Corynebacterium glutamicum genome: features and impacts on biotechnological processes.</title>
        <authorList>
            <person name="Ikeda M."/>
            <person name="Nakagawa S."/>
        </authorList>
    </citation>
    <scope>NUCLEOTIDE SEQUENCE [LARGE SCALE GENOMIC DNA]</scope>
    <source>
        <strain>ATCC 13032 / DSM 20300 / JCM 1318 / BCRC 11384 / CCUG 27702 / LMG 3730 / NBRC 12168 / NCIMB 10025 / NRRL B-2784 / 534</strain>
    </source>
</reference>
<reference key="2">
    <citation type="journal article" date="2003" name="J. Biotechnol.">
        <title>The complete Corynebacterium glutamicum ATCC 13032 genome sequence and its impact on the production of L-aspartate-derived amino acids and vitamins.</title>
        <authorList>
            <person name="Kalinowski J."/>
            <person name="Bathe B."/>
            <person name="Bartels D."/>
            <person name="Bischoff N."/>
            <person name="Bott M."/>
            <person name="Burkovski A."/>
            <person name="Dusch N."/>
            <person name="Eggeling L."/>
            <person name="Eikmanns B.J."/>
            <person name="Gaigalat L."/>
            <person name="Goesmann A."/>
            <person name="Hartmann M."/>
            <person name="Huthmacher K."/>
            <person name="Kraemer R."/>
            <person name="Linke B."/>
            <person name="McHardy A.C."/>
            <person name="Meyer F."/>
            <person name="Moeckel B."/>
            <person name="Pfefferle W."/>
            <person name="Puehler A."/>
            <person name="Rey D.A."/>
            <person name="Rueckert C."/>
            <person name="Rupp O."/>
            <person name="Sahm H."/>
            <person name="Wendisch V.F."/>
            <person name="Wiegraebe I."/>
            <person name="Tauch A."/>
        </authorList>
    </citation>
    <scope>NUCLEOTIDE SEQUENCE [LARGE SCALE GENOMIC DNA]</scope>
    <source>
        <strain>ATCC 13032 / DSM 20300 / JCM 1318 / BCRC 11384 / CCUG 27702 / LMG 3730 / NBRC 12168 / NCIMB 10025 / NRRL B-2784 / 534</strain>
    </source>
</reference>
<comment type="function">
    <text evidence="1">Binds 16S rRNA, required for the assembly of 30S particles and may also be responsible for determining the conformation of the 16S rRNA at the A site.</text>
</comment>
<comment type="subunit">
    <text evidence="1">Part of the 30S ribosomal subunit. Contacts proteins S3 and S10.</text>
</comment>
<comment type="similarity">
    <text evidence="1">Belongs to the universal ribosomal protein uS14 family.</text>
</comment>
<sequence length="101" mass="11732">MAKKSKIAKNEKRKEIVARYAERRAELKAIISNPNTSDEDRLDAQFELNSQPRDAAAVRVRNRDSHDGRPRGYLRKFGLSRVRMREMAHRGELPGVRKSSW</sequence>
<organism>
    <name type="scientific">Corynebacterium glutamicum (strain ATCC 13032 / DSM 20300 / JCM 1318 / BCRC 11384 / CCUG 27702 / LMG 3730 / NBRC 12168 / NCIMB 10025 / NRRL B-2784 / 534)</name>
    <dbReference type="NCBI Taxonomy" id="196627"/>
    <lineage>
        <taxon>Bacteria</taxon>
        <taxon>Bacillati</taxon>
        <taxon>Actinomycetota</taxon>
        <taxon>Actinomycetes</taxon>
        <taxon>Mycobacteriales</taxon>
        <taxon>Corynebacteriaceae</taxon>
        <taxon>Corynebacterium</taxon>
    </lineage>
</organism>
<dbReference type="EMBL" id="BA000036">
    <property type="protein sequence ID" value="BAB98260.1"/>
    <property type="molecule type" value="Genomic_DNA"/>
</dbReference>
<dbReference type="EMBL" id="BX927150">
    <property type="protein sequence ID" value="CAF19572.1"/>
    <property type="molecule type" value="Genomic_DNA"/>
</dbReference>
<dbReference type="RefSeq" id="NP_600095.1">
    <property type="nucleotide sequence ID" value="NC_003450.3"/>
</dbReference>
<dbReference type="RefSeq" id="WP_011013938.1">
    <property type="nucleotide sequence ID" value="NC_006958.1"/>
</dbReference>
<dbReference type="SMR" id="Q8NS17"/>
<dbReference type="STRING" id="196627.cg0989"/>
<dbReference type="GeneID" id="1018861"/>
<dbReference type="KEGG" id="cgb:cg0989"/>
<dbReference type="KEGG" id="cgl:Cgl0867"/>
<dbReference type="PATRIC" id="fig|196627.13.peg.851"/>
<dbReference type="eggNOG" id="COG0199">
    <property type="taxonomic scope" value="Bacteria"/>
</dbReference>
<dbReference type="HOGENOM" id="CLU_139869_0_1_11"/>
<dbReference type="OrthoDB" id="9810484at2"/>
<dbReference type="BioCyc" id="CORYNE:G18NG-10437-MONOMER"/>
<dbReference type="Proteomes" id="UP000000582">
    <property type="component" value="Chromosome"/>
</dbReference>
<dbReference type="Proteomes" id="UP000001009">
    <property type="component" value="Chromosome"/>
</dbReference>
<dbReference type="GO" id="GO:0015935">
    <property type="term" value="C:small ribosomal subunit"/>
    <property type="evidence" value="ECO:0007669"/>
    <property type="project" value="TreeGrafter"/>
</dbReference>
<dbReference type="GO" id="GO:0019843">
    <property type="term" value="F:rRNA binding"/>
    <property type="evidence" value="ECO:0007669"/>
    <property type="project" value="UniProtKB-UniRule"/>
</dbReference>
<dbReference type="GO" id="GO:0003735">
    <property type="term" value="F:structural constituent of ribosome"/>
    <property type="evidence" value="ECO:0007669"/>
    <property type="project" value="InterPro"/>
</dbReference>
<dbReference type="GO" id="GO:0006412">
    <property type="term" value="P:translation"/>
    <property type="evidence" value="ECO:0007669"/>
    <property type="project" value="UniProtKB-UniRule"/>
</dbReference>
<dbReference type="FunFam" id="1.10.287.1480:FF:000001">
    <property type="entry name" value="30S ribosomal protein S14"/>
    <property type="match status" value="1"/>
</dbReference>
<dbReference type="Gene3D" id="1.10.287.1480">
    <property type="match status" value="1"/>
</dbReference>
<dbReference type="HAMAP" id="MF_00537">
    <property type="entry name" value="Ribosomal_uS14_1"/>
    <property type="match status" value="1"/>
</dbReference>
<dbReference type="InterPro" id="IPR001209">
    <property type="entry name" value="Ribosomal_uS14"/>
</dbReference>
<dbReference type="InterPro" id="IPR023036">
    <property type="entry name" value="Ribosomal_uS14_bac/plastid"/>
</dbReference>
<dbReference type="NCBIfam" id="NF006477">
    <property type="entry name" value="PRK08881.1"/>
    <property type="match status" value="1"/>
</dbReference>
<dbReference type="PANTHER" id="PTHR19836">
    <property type="entry name" value="30S RIBOSOMAL PROTEIN S14"/>
    <property type="match status" value="1"/>
</dbReference>
<dbReference type="PANTHER" id="PTHR19836:SF23">
    <property type="entry name" value="SMALL RIBOSOMAL SUBUNIT PROTEIN US14A"/>
    <property type="match status" value="1"/>
</dbReference>
<dbReference type="Pfam" id="PF00253">
    <property type="entry name" value="Ribosomal_S14"/>
    <property type="match status" value="1"/>
</dbReference>
<dbReference type="SUPFAM" id="SSF57716">
    <property type="entry name" value="Glucocorticoid receptor-like (DNA-binding domain)"/>
    <property type="match status" value="1"/>
</dbReference>
<name>RS14_CORGL</name>
<evidence type="ECO:0000255" key="1">
    <source>
        <dbReference type="HAMAP-Rule" id="MF_00537"/>
    </source>
</evidence>
<evidence type="ECO:0000256" key="2">
    <source>
        <dbReference type="SAM" id="MobiDB-lite"/>
    </source>
</evidence>
<evidence type="ECO:0000305" key="3"/>
<accession>Q8NS17</accession>
<accession>Q6M6S4</accession>